<reference key="1">
    <citation type="journal article" date="2002" name="Proc. Natl. Acad. Sci. U.S.A.">
        <title>The complete genome of hyperthermophile Methanopyrus kandleri AV19 and monophyly of archaeal methanogens.</title>
        <authorList>
            <person name="Slesarev A.I."/>
            <person name="Mezhevaya K.V."/>
            <person name="Makarova K.S."/>
            <person name="Polushin N.N."/>
            <person name="Shcherbinina O.V."/>
            <person name="Shakhova V.V."/>
            <person name="Belova G.I."/>
            <person name="Aravind L."/>
            <person name="Natale D.A."/>
            <person name="Rogozin I.B."/>
            <person name="Tatusov R.L."/>
            <person name="Wolf Y.I."/>
            <person name="Stetter K.O."/>
            <person name="Malykh A.G."/>
            <person name="Koonin E.V."/>
            <person name="Kozyavkin S.A."/>
        </authorList>
    </citation>
    <scope>NUCLEOTIDE SEQUENCE [LARGE SCALE GENOMIC DNA]</scope>
    <source>
        <strain>AV19 / DSM 6324 / JCM 9639 / NBRC 100938</strain>
    </source>
</reference>
<organism>
    <name type="scientific">Methanopyrus kandleri (strain AV19 / DSM 6324 / JCM 9639 / NBRC 100938)</name>
    <dbReference type="NCBI Taxonomy" id="190192"/>
    <lineage>
        <taxon>Archaea</taxon>
        <taxon>Methanobacteriati</taxon>
        <taxon>Methanobacteriota</taxon>
        <taxon>Methanomada group</taxon>
        <taxon>Methanopyri</taxon>
        <taxon>Methanopyrales</taxon>
        <taxon>Methanopyraceae</taxon>
        <taxon>Methanopyrus</taxon>
    </lineage>
</organism>
<keyword id="KW-0067">ATP-binding</keyword>
<keyword id="KW-0173">Coenzyme A biosynthesis</keyword>
<keyword id="KW-0963">Cytoplasm</keyword>
<keyword id="KW-0547">Nucleotide-binding</keyword>
<keyword id="KW-0548">Nucleotidyltransferase</keyword>
<keyword id="KW-1185">Reference proteome</keyword>
<keyword id="KW-0808">Transferase</keyword>
<name>COAD_METKA</name>
<comment type="function">
    <text evidence="1">Reversibly transfers an adenylyl group from ATP to 4'-phosphopantetheine, yielding dephospho-CoA (dPCoA) and pyrophosphate.</text>
</comment>
<comment type="catalytic activity">
    <reaction evidence="1">
        <text>(R)-4'-phosphopantetheine + ATP + H(+) = 3'-dephospho-CoA + diphosphate</text>
        <dbReference type="Rhea" id="RHEA:19801"/>
        <dbReference type="ChEBI" id="CHEBI:15378"/>
        <dbReference type="ChEBI" id="CHEBI:30616"/>
        <dbReference type="ChEBI" id="CHEBI:33019"/>
        <dbReference type="ChEBI" id="CHEBI:57328"/>
        <dbReference type="ChEBI" id="CHEBI:61723"/>
        <dbReference type="EC" id="2.7.7.3"/>
    </reaction>
</comment>
<comment type="pathway">
    <text evidence="1">Cofactor biosynthesis; coenzyme A biosynthesis.</text>
</comment>
<comment type="subcellular location">
    <subcellularLocation>
        <location evidence="1">Cytoplasm</location>
    </subcellularLocation>
</comment>
<comment type="similarity">
    <text evidence="1">Belongs to the eukaryotic CoaD family.</text>
</comment>
<feature type="chain" id="PRO_0000156321" description="Phosphopantetheine adenylyltransferase">
    <location>
        <begin position="1"/>
        <end position="157"/>
    </location>
</feature>
<dbReference type="EC" id="2.7.7.3" evidence="1"/>
<dbReference type="EMBL" id="AE009439">
    <property type="protein sequence ID" value="AAM02717.1"/>
    <property type="molecule type" value="Genomic_DNA"/>
</dbReference>
<dbReference type="SMR" id="Q8TGY4"/>
<dbReference type="FunCoup" id="Q8TGY4">
    <property type="interactions" value="93"/>
</dbReference>
<dbReference type="STRING" id="190192.MK1504"/>
<dbReference type="PaxDb" id="190192-MK1504"/>
<dbReference type="EnsemblBacteria" id="AAM02717">
    <property type="protein sequence ID" value="AAM02717"/>
    <property type="gene ID" value="MK1504"/>
</dbReference>
<dbReference type="KEGG" id="mka:MK1504"/>
<dbReference type="PATRIC" id="fig|190192.8.peg.1662"/>
<dbReference type="HOGENOM" id="CLU_035272_5_0_2"/>
<dbReference type="InParanoid" id="Q8TGY4"/>
<dbReference type="UniPathway" id="UPA00241"/>
<dbReference type="Proteomes" id="UP000001826">
    <property type="component" value="Chromosome"/>
</dbReference>
<dbReference type="GO" id="GO:0005737">
    <property type="term" value="C:cytoplasm"/>
    <property type="evidence" value="ECO:0007669"/>
    <property type="project" value="UniProtKB-SubCell"/>
</dbReference>
<dbReference type="GO" id="GO:0005524">
    <property type="term" value="F:ATP binding"/>
    <property type="evidence" value="ECO:0007669"/>
    <property type="project" value="UniProtKB-KW"/>
</dbReference>
<dbReference type="GO" id="GO:0004595">
    <property type="term" value="F:pantetheine-phosphate adenylyltransferase activity"/>
    <property type="evidence" value="ECO:0007669"/>
    <property type="project" value="UniProtKB-UniRule"/>
</dbReference>
<dbReference type="GO" id="GO:0015937">
    <property type="term" value="P:coenzyme A biosynthetic process"/>
    <property type="evidence" value="ECO:0007669"/>
    <property type="project" value="UniProtKB-UniRule"/>
</dbReference>
<dbReference type="CDD" id="cd02164">
    <property type="entry name" value="PPAT_CoAS"/>
    <property type="match status" value="1"/>
</dbReference>
<dbReference type="Gene3D" id="3.40.50.620">
    <property type="entry name" value="HUPs"/>
    <property type="match status" value="1"/>
</dbReference>
<dbReference type="HAMAP" id="MF_00647">
    <property type="entry name" value="PPAT_arch"/>
    <property type="match status" value="1"/>
</dbReference>
<dbReference type="InterPro" id="IPR050385">
    <property type="entry name" value="Archaeal_FAD_synthase"/>
</dbReference>
<dbReference type="InterPro" id="IPR004821">
    <property type="entry name" value="Cyt_trans-like"/>
</dbReference>
<dbReference type="InterPro" id="IPR023540">
    <property type="entry name" value="PPAT_arch"/>
</dbReference>
<dbReference type="InterPro" id="IPR014729">
    <property type="entry name" value="Rossmann-like_a/b/a_fold"/>
</dbReference>
<dbReference type="NCBIfam" id="TIGR00125">
    <property type="entry name" value="cyt_tran_rel"/>
    <property type="match status" value="1"/>
</dbReference>
<dbReference type="NCBIfam" id="NF001985">
    <property type="entry name" value="PRK00777.1"/>
    <property type="match status" value="1"/>
</dbReference>
<dbReference type="PANTHER" id="PTHR43793">
    <property type="entry name" value="FAD SYNTHASE"/>
    <property type="match status" value="1"/>
</dbReference>
<dbReference type="PANTHER" id="PTHR43793:SF1">
    <property type="entry name" value="FAD SYNTHASE"/>
    <property type="match status" value="1"/>
</dbReference>
<dbReference type="Pfam" id="PF01467">
    <property type="entry name" value="CTP_transf_like"/>
    <property type="match status" value="1"/>
</dbReference>
<dbReference type="SUPFAM" id="SSF52374">
    <property type="entry name" value="Nucleotidylyl transferase"/>
    <property type="match status" value="1"/>
</dbReference>
<gene>
    <name evidence="1" type="primary">coaD</name>
    <name type="ordered locus">MK1504</name>
</gene>
<proteinExistence type="inferred from homology"/>
<sequence>MTPLARFRKVVVGGTFDRLHLGHQRLLSVALELGDRVVIGVTTDSFVREEGKKGVEPFEERVRAVRRFVEEKGASDRVEIVPLEDRYGTTLEDDEMDAIVVSPETEPVALEINELRRKRGFPPLSIVVIPFVLDGDGRKISSSRLRGEVDEGPCRDD</sequence>
<protein>
    <recommendedName>
        <fullName evidence="1">Phosphopantetheine adenylyltransferase</fullName>
        <ecNumber evidence="1">2.7.7.3</ecNumber>
    </recommendedName>
    <alternativeName>
        <fullName evidence="1">Dephospho-CoA pyrophosphorylase</fullName>
    </alternativeName>
    <alternativeName>
        <fullName evidence="1">Pantetheine-phosphate adenylyltransferase</fullName>
        <shortName evidence="1">PPAT</shortName>
    </alternativeName>
</protein>
<evidence type="ECO:0000255" key="1">
    <source>
        <dbReference type="HAMAP-Rule" id="MF_00647"/>
    </source>
</evidence>
<accession>Q8TGY4</accession>